<reference key="1">
    <citation type="journal article" date="2010" name="Stand. Genomic Sci.">
        <title>Complete genome sequence of Rhizobium leguminosarum bv trifolii strain WSM2304, an effective microsymbiont of the South American clover Trifolium polymorphum.</title>
        <authorList>
            <person name="Reeve W."/>
            <person name="O'Hara G."/>
            <person name="Chain P."/>
            <person name="Ardley J."/>
            <person name="Brau L."/>
            <person name="Nandesena K."/>
            <person name="Tiwari R."/>
            <person name="Malfatti S."/>
            <person name="Kiss H."/>
            <person name="Lapidus A."/>
            <person name="Copeland A."/>
            <person name="Nolan M."/>
            <person name="Land M."/>
            <person name="Ivanova N."/>
            <person name="Mavromatis K."/>
            <person name="Markowitz V."/>
            <person name="Kyrpides N."/>
            <person name="Melino V."/>
            <person name="Denton M."/>
            <person name="Yates R."/>
            <person name="Howieson J."/>
        </authorList>
    </citation>
    <scope>NUCLEOTIDE SEQUENCE [LARGE SCALE GENOMIC DNA]</scope>
    <source>
        <strain>WSM2304</strain>
    </source>
</reference>
<name>RS19_RHILW</name>
<protein>
    <recommendedName>
        <fullName evidence="1">Small ribosomal subunit protein uS19</fullName>
    </recommendedName>
    <alternativeName>
        <fullName evidence="2">30S ribosomal protein S19</fullName>
    </alternativeName>
</protein>
<feature type="chain" id="PRO_1000128025" description="Small ribosomal subunit protein uS19">
    <location>
        <begin position="1"/>
        <end position="92"/>
    </location>
</feature>
<evidence type="ECO:0000255" key="1">
    <source>
        <dbReference type="HAMAP-Rule" id="MF_00531"/>
    </source>
</evidence>
<evidence type="ECO:0000305" key="2"/>
<sequence length="92" mass="10399">MARSVWKGPFVDGYLLKKAEKVREGGRAEVIKIWSRRSTILPQFVGLTFGVYNGSKHIPVSVNEDMVGHKFGEFSPTRTYYGHGADKKAKRK</sequence>
<accession>B5ZYT9</accession>
<gene>
    <name evidence="1" type="primary">rpsS</name>
    <name type="ordered locus">Rleg2_1336</name>
</gene>
<proteinExistence type="inferred from homology"/>
<comment type="function">
    <text evidence="1">Protein S19 forms a complex with S13 that binds strongly to the 16S ribosomal RNA.</text>
</comment>
<comment type="similarity">
    <text evidence="1">Belongs to the universal ribosomal protein uS19 family.</text>
</comment>
<dbReference type="EMBL" id="CP001191">
    <property type="protein sequence ID" value="ACI54630.1"/>
    <property type="molecule type" value="Genomic_DNA"/>
</dbReference>
<dbReference type="RefSeq" id="WP_003573797.1">
    <property type="nucleotide sequence ID" value="NC_011369.1"/>
</dbReference>
<dbReference type="SMR" id="B5ZYT9"/>
<dbReference type="STRING" id="395492.Rleg2_1336"/>
<dbReference type="GeneID" id="91148132"/>
<dbReference type="KEGG" id="rlt:Rleg2_1336"/>
<dbReference type="eggNOG" id="COG0185">
    <property type="taxonomic scope" value="Bacteria"/>
</dbReference>
<dbReference type="HOGENOM" id="CLU_144911_0_1_5"/>
<dbReference type="Proteomes" id="UP000008330">
    <property type="component" value="Chromosome"/>
</dbReference>
<dbReference type="GO" id="GO:0005737">
    <property type="term" value="C:cytoplasm"/>
    <property type="evidence" value="ECO:0007669"/>
    <property type="project" value="UniProtKB-ARBA"/>
</dbReference>
<dbReference type="GO" id="GO:0015935">
    <property type="term" value="C:small ribosomal subunit"/>
    <property type="evidence" value="ECO:0007669"/>
    <property type="project" value="InterPro"/>
</dbReference>
<dbReference type="GO" id="GO:0019843">
    <property type="term" value="F:rRNA binding"/>
    <property type="evidence" value="ECO:0007669"/>
    <property type="project" value="UniProtKB-UniRule"/>
</dbReference>
<dbReference type="GO" id="GO:0003735">
    <property type="term" value="F:structural constituent of ribosome"/>
    <property type="evidence" value="ECO:0007669"/>
    <property type="project" value="InterPro"/>
</dbReference>
<dbReference type="GO" id="GO:0000028">
    <property type="term" value="P:ribosomal small subunit assembly"/>
    <property type="evidence" value="ECO:0007669"/>
    <property type="project" value="TreeGrafter"/>
</dbReference>
<dbReference type="GO" id="GO:0006412">
    <property type="term" value="P:translation"/>
    <property type="evidence" value="ECO:0007669"/>
    <property type="project" value="UniProtKB-UniRule"/>
</dbReference>
<dbReference type="FunFam" id="3.30.860.10:FF:000001">
    <property type="entry name" value="30S ribosomal protein S19"/>
    <property type="match status" value="1"/>
</dbReference>
<dbReference type="Gene3D" id="3.30.860.10">
    <property type="entry name" value="30s Ribosomal Protein S19, Chain A"/>
    <property type="match status" value="1"/>
</dbReference>
<dbReference type="HAMAP" id="MF_00531">
    <property type="entry name" value="Ribosomal_uS19"/>
    <property type="match status" value="1"/>
</dbReference>
<dbReference type="InterPro" id="IPR002222">
    <property type="entry name" value="Ribosomal_uS19"/>
</dbReference>
<dbReference type="InterPro" id="IPR005732">
    <property type="entry name" value="Ribosomal_uS19_bac-type"/>
</dbReference>
<dbReference type="InterPro" id="IPR020934">
    <property type="entry name" value="Ribosomal_uS19_CS"/>
</dbReference>
<dbReference type="InterPro" id="IPR023575">
    <property type="entry name" value="Ribosomal_uS19_SF"/>
</dbReference>
<dbReference type="NCBIfam" id="TIGR01050">
    <property type="entry name" value="rpsS_bact"/>
    <property type="match status" value="1"/>
</dbReference>
<dbReference type="PANTHER" id="PTHR11880">
    <property type="entry name" value="RIBOSOMAL PROTEIN S19P FAMILY MEMBER"/>
    <property type="match status" value="1"/>
</dbReference>
<dbReference type="PANTHER" id="PTHR11880:SF8">
    <property type="entry name" value="SMALL RIBOSOMAL SUBUNIT PROTEIN US19M"/>
    <property type="match status" value="1"/>
</dbReference>
<dbReference type="Pfam" id="PF00203">
    <property type="entry name" value="Ribosomal_S19"/>
    <property type="match status" value="1"/>
</dbReference>
<dbReference type="PIRSF" id="PIRSF002144">
    <property type="entry name" value="Ribosomal_S19"/>
    <property type="match status" value="1"/>
</dbReference>
<dbReference type="PRINTS" id="PR00975">
    <property type="entry name" value="RIBOSOMALS19"/>
</dbReference>
<dbReference type="SUPFAM" id="SSF54570">
    <property type="entry name" value="Ribosomal protein S19"/>
    <property type="match status" value="1"/>
</dbReference>
<dbReference type="PROSITE" id="PS00323">
    <property type="entry name" value="RIBOSOMAL_S19"/>
    <property type="match status" value="1"/>
</dbReference>
<organism>
    <name type="scientific">Rhizobium leguminosarum bv. trifolii (strain WSM2304)</name>
    <dbReference type="NCBI Taxonomy" id="395492"/>
    <lineage>
        <taxon>Bacteria</taxon>
        <taxon>Pseudomonadati</taxon>
        <taxon>Pseudomonadota</taxon>
        <taxon>Alphaproteobacteria</taxon>
        <taxon>Hyphomicrobiales</taxon>
        <taxon>Rhizobiaceae</taxon>
        <taxon>Rhizobium/Agrobacterium group</taxon>
        <taxon>Rhizobium</taxon>
    </lineage>
</organism>
<keyword id="KW-1185">Reference proteome</keyword>
<keyword id="KW-0687">Ribonucleoprotein</keyword>
<keyword id="KW-0689">Ribosomal protein</keyword>
<keyword id="KW-0694">RNA-binding</keyword>
<keyword id="KW-0699">rRNA-binding</keyword>